<comment type="function">
    <text evidence="1">Component of the acetyl coenzyme A carboxylase (ACC) complex. Biotin carboxylase (BC) catalyzes the carboxylation of biotin on its carrier protein (BCCP) and then the CO(2) group is transferred by the transcarboxylase to acetyl-CoA to form malonyl-CoA.</text>
</comment>
<comment type="catalytic activity">
    <reaction evidence="1">
        <text>N(6)-carboxybiotinyl-L-lysyl-[protein] + acetyl-CoA = N(6)-biotinyl-L-lysyl-[protein] + malonyl-CoA</text>
        <dbReference type="Rhea" id="RHEA:54728"/>
        <dbReference type="Rhea" id="RHEA-COMP:10505"/>
        <dbReference type="Rhea" id="RHEA-COMP:10506"/>
        <dbReference type="ChEBI" id="CHEBI:57288"/>
        <dbReference type="ChEBI" id="CHEBI:57384"/>
        <dbReference type="ChEBI" id="CHEBI:83144"/>
        <dbReference type="ChEBI" id="CHEBI:83145"/>
        <dbReference type="EC" id="2.1.3.15"/>
    </reaction>
</comment>
<comment type="cofactor">
    <cofactor evidence="1">
        <name>Zn(2+)</name>
        <dbReference type="ChEBI" id="CHEBI:29105"/>
    </cofactor>
    <text evidence="1">Binds 1 zinc ion per subunit.</text>
</comment>
<comment type="pathway">
    <text evidence="1">Lipid metabolism; malonyl-CoA biosynthesis; malonyl-CoA from acetyl-CoA: step 1/1.</text>
</comment>
<comment type="subunit">
    <text evidence="1">Acetyl-CoA carboxylase is a heterohexamer composed of biotin carboxyl carrier protein (AccB), biotin carboxylase (AccC) and two subunits each of ACCase subunit alpha (AccA) and ACCase subunit beta (AccD).</text>
</comment>
<comment type="subcellular location">
    <subcellularLocation>
        <location evidence="1">Cytoplasm</location>
    </subcellularLocation>
</comment>
<comment type="similarity">
    <text evidence="1">Belongs to the AccD/PCCB family.</text>
</comment>
<protein>
    <recommendedName>
        <fullName evidence="1">Acetyl-coenzyme A carboxylase carboxyl transferase subunit beta 2</fullName>
        <shortName evidence="1">ACCase subunit beta 2</shortName>
        <shortName evidence="1">Acetyl-CoA carboxylase carboxyltransferase subunit beta 2</shortName>
        <ecNumber evidence="1">2.1.3.15</ecNumber>
    </recommendedName>
</protein>
<evidence type="ECO:0000255" key="1">
    <source>
        <dbReference type="HAMAP-Rule" id="MF_01395"/>
    </source>
</evidence>
<evidence type="ECO:0000255" key="2">
    <source>
        <dbReference type="PROSITE-ProRule" id="PRU01136"/>
    </source>
</evidence>
<organism>
    <name type="scientific">Roseiflexus sp. (strain RS-1)</name>
    <dbReference type="NCBI Taxonomy" id="357808"/>
    <lineage>
        <taxon>Bacteria</taxon>
        <taxon>Bacillati</taxon>
        <taxon>Chloroflexota</taxon>
        <taxon>Chloroflexia</taxon>
        <taxon>Chloroflexales</taxon>
        <taxon>Roseiflexineae</taxon>
        <taxon>Roseiflexaceae</taxon>
        <taxon>Roseiflexus</taxon>
    </lineage>
</organism>
<sequence length="300" mass="32755">MKELIQRSRKSFTVVQSVEADVPDNVWIKCPSCRELIYHKQLAERMKVCRCGYHMRLKAREWLALLDEDSFVEHDAHLRPADPLGFVSPKETYADKLREAQRRTGLADVVVSGVGSIEGRRLAVAVCDFEFIGGSMGSVFGEKMARAAERAAALGIPLLTINTSGGARMQEGVIALMQLAKVNMALTRLAAARQPHIAVLVDPCYGGVTASYASVADIIIAEPGASIGFAGRRVIEQTIRQKLPADFQTAEFMLQHGMVDMVVPRSELHSTLAKLLRLYAAEGRATAHKSEPIVTALASL</sequence>
<feature type="chain" id="PRO_0000389841" description="Acetyl-coenzyme A carboxylase carboxyl transferase subunit beta 2">
    <location>
        <begin position="1"/>
        <end position="300"/>
    </location>
</feature>
<feature type="domain" description="CoA carboxyltransferase N-terminal" evidence="2">
    <location>
        <begin position="26"/>
        <end position="294"/>
    </location>
</feature>
<feature type="zinc finger region" description="C4-type" evidence="1">
    <location>
        <begin position="30"/>
        <end position="51"/>
    </location>
</feature>
<feature type="binding site" evidence="1">
    <location>
        <position position="30"/>
    </location>
    <ligand>
        <name>Zn(2+)</name>
        <dbReference type="ChEBI" id="CHEBI:29105"/>
    </ligand>
</feature>
<feature type="binding site" evidence="1">
    <location>
        <position position="33"/>
    </location>
    <ligand>
        <name>Zn(2+)</name>
        <dbReference type="ChEBI" id="CHEBI:29105"/>
    </ligand>
</feature>
<feature type="binding site" evidence="1">
    <location>
        <position position="49"/>
    </location>
    <ligand>
        <name>Zn(2+)</name>
        <dbReference type="ChEBI" id="CHEBI:29105"/>
    </ligand>
</feature>
<feature type="binding site" evidence="1">
    <location>
        <position position="51"/>
    </location>
    <ligand>
        <name>Zn(2+)</name>
        <dbReference type="ChEBI" id="CHEBI:29105"/>
    </ligand>
</feature>
<name>ACCD2_ROSS1</name>
<proteinExistence type="inferred from homology"/>
<keyword id="KW-0067">ATP-binding</keyword>
<keyword id="KW-0963">Cytoplasm</keyword>
<keyword id="KW-0275">Fatty acid biosynthesis</keyword>
<keyword id="KW-0276">Fatty acid metabolism</keyword>
<keyword id="KW-0444">Lipid biosynthesis</keyword>
<keyword id="KW-0443">Lipid metabolism</keyword>
<keyword id="KW-0479">Metal-binding</keyword>
<keyword id="KW-0547">Nucleotide-binding</keyword>
<keyword id="KW-0808">Transferase</keyword>
<keyword id="KW-0862">Zinc</keyword>
<keyword id="KW-0863">Zinc-finger</keyword>
<dbReference type="EC" id="2.1.3.15" evidence="1"/>
<dbReference type="EMBL" id="CP000686">
    <property type="protein sequence ID" value="ABQ91560.1"/>
    <property type="molecule type" value="Genomic_DNA"/>
</dbReference>
<dbReference type="RefSeq" id="WP_011957904.1">
    <property type="nucleotide sequence ID" value="NC_009523.1"/>
</dbReference>
<dbReference type="SMR" id="A5UY57"/>
<dbReference type="STRING" id="357808.RoseRS_3199"/>
<dbReference type="KEGG" id="rrs:RoseRS_3199"/>
<dbReference type="eggNOG" id="COG0777">
    <property type="taxonomic scope" value="Bacteria"/>
</dbReference>
<dbReference type="HOGENOM" id="CLU_015486_1_1_0"/>
<dbReference type="OrthoDB" id="9772975at2"/>
<dbReference type="UniPathway" id="UPA00655">
    <property type="reaction ID" value="UER00711"/>
</dbReference>
<dbReference type="Proteomes" id="UP000006554">
    <property type="component" value="Chromosome"/>
</dbReference>
<dbReference type="GO" id="GO:0009317">
    <property type="term" value="C:acetyl-CoA carboxylase complex"/>
    <property type="evidence" value="ECO:0007669"/>
    <property type="project" value="InterPro"/>
</dbReference>
<dbReference type="GO" id="GO:0003989">
    <property type="term" value="F:acetyl-CoA carboxylase activity"/>
    <property type="evidence" value="ECO:0007669"/>
    <property type="project" value="InterPro"/>
</dbReference>
<dbReference type="GO" id="GO:0005524">
    <property type="term" value="F:ATP binding"/>
    <property type="evidence" value="ECO:0007669"/>
    <property type="project" value="UniProtKB-KW"/>
</dbReference>
<dbReference type="GO" id="GO:0016743">
    <property type="term" value="F:carboxyl- or carbamoyltransferase activity"/>
    <property type="evidence" value="ECO:0007669"/>
    <property type="project" value="UniProtKB-UniRule"/>
</dbReference>
<dbReference type="GO" id="GO:0008270">
    <property type="term" value="F:zinc ion binding"/>
    <property type="evidence" value="ECO:0007669"/>
    <property type="project" value="UniProtKB-UniRule"/>
</dbReference>
<dbReference type="GO" id="GO:0006633">
    <property type="term" value="P:fatty acid biosynthetic process"/>
    <property type="evidence" value="ECO:0007669"/>
    <property type="project" value="UniProtKB-KW"/>
</dbReference>
<dbReference type="GO" id="GO:2001295">
    <property type="term" value="P:malonyl-CoA biosynthetic process"/>
    <property type="evidence" value="ECO:0007669"/>
    <property type="project" value="UniProtKB-UniRule"/>
</dbReference>
<dbReference type="Gene3D" id="3.90.226.10">
    <property type="entry name" value="2-enoyl-CoA Hydratase, Chain A, domain 1"/>
    <property type="match status" value="1"/>
</dbReference>
<dbReference type="HAMAP" id="MF_01395">
    <property type="entry name" value="AcetylCoA_CT_beta"/>
    <property type="match status" value="1"/>
</dbReference>
<dbReference type="InterPro" id="IPR034733">
    <property type="entry name" value="AcCoA_carboxyl_beta"/>
</dbReference>
<dbReference type="InterPro" id="IPR000438">
    <property type="entry name" value="Acetyl_CoA_COase_Trfase_b_su"/>
</dbReference>
<dbReference type="InterPro" id="IPR029045">
    <property type="entry name" value="ClpP/crotonase-like_dom_sf"/>
</dbReference>
<dbReference type="InterPro" id="IPR011762">
    <property type="entry name" value="COA_CT_N"/>
</dbReference>
<dbReference type="InterPro" id="IPR041010">
    <property type="entry name" value="Znf-ACC"/>
</dbReference>
<dbReference type="NCBIfam" id="TIGR00515">
    <property type="entry name" value="accD"/>
    <property type="match status" value="1"/>
</dbReference>
<dbReference type="PANTHER" id="PTHR42995">
    <property type="entry name" value="ACETYL-COENZYME A CARBOXYLASE CARBOXYL TRANSFERASE SUBUNIT BETA, CHLOROPLASTIC"/>
    <property type="match status" value="1"/>
</dbReference>
<dbReference type="PANTHER" id="PTHR42995:SF5">
    <property type="entry name" value="ACETYL-COENZYME A CARBOXYLASE CARBOXYL TRANSFERASE SUBUNIT BETA, CHLOROPLASTIC"/>
    <property type="match status" value="1"/>
</dbReference>
<dbReference type="Pfam" id="PF01039">
    <property type="entry name" value="Carboxyl_trans"/>
    <property type="match status" value="1"/>
</dbReference>
<dbReference type="Pfam" id="PF17848">
    <property type="entry name" value="Zn_ribbon_ACC"/>
    <property type="match status" value="1"/>
</dbReference>
<dbReference type="PRINTS" id="PR01070">
    <property type="entry name" value="ACCCTRFRASEB"/>
</dbReference>
<dbReference type="SUPFAM" id="SSF52096">
    <property type="entry name" value="ClpP/crotonase"/>
    <property type="match status" value="1"/>
</dbReference>
<dbReference type="PROSITE" id="PS50980">
    <property type="entry name" value="COA_CT_NTER"/>
    <property type="match status" value="1"/>
</dbReference>
<reference key="1">
    <citation type="submission" date="2007-04" db="EMBL/GenBank/DDBJ databases">
        <title>Complete sequence of Roseiflexus sp. RS-1.</title>
        <authorList>
            <consortium name="US DOE Joint Genome Institute"/>
            <person name="Copeland A."/>
            <person name="Lucas S."/>
            <person name="Lapidus A."/>
            <person name="Barry K."/>
            <person name="Detter J.C."/>
            <person name="Glavina del Rio T."/>
            <person name="Hammon N."/>
            <person name="Israni S."/>
            <person name="Dalin E."/>
            <person name="Tice H."/>
            <person name="Pitluck S."/>
            <person name="Chertkov O."/>
            <person name="Brettin T."/>
            <person name="Bruce D."/>
            <person name="Han C."/>
            <person name="Schmutz J."/>
            <person name="Larimer F."/>
            <person name="Land M."/>
            <person name="Hauser L."/>
            <person name="Kyrpides N."/>
            <person name="Mikhailova N."/>
            <person name="Bryant D.A."/>
            <person name="Richardson P."/>
        </authorList>
    </citation>
    <scope>NUCLEOTIDE SEQUENCE [LARGE SCALE GENOMIC DNA]</scope>
    <source>
        <strain>RS-1</strain>
    </source>
</reference>
<gene>
    <name evidence="1" type="primary">accD2</name>
    <name type="ordered locus">RoseRS_3199</name>
</gene>
<accession>A5UY57</accession>